<evidence type="ECO:0000255" key="1">
    <source>
        <dbReference type="HAMAP-Rule" id="MF_00693"/>
    </source>
</evidence>
<evidence type="ECO:0000256" key="2">
    <source>
        <dbReference type="SAM" id="MobiDB-lite"/>
    </source>
</evidence>
<comment type="subcellular location">
    <subcellularLocation>
        <location evidence="1">Cytoplasm</location>
    </subcellularLocation>
</comment>
<comment type="similarity">
    <text evidence="1">Belongs to the TACO1 family.</text>
</comment>
<organism>
    <name type="scientific">Azoarcus sp. (strain BH72)</name>
    <dbReference type="NCBI Taxonomy" id="418699"/>
    <lineage>
        <taxon>Bacteria</taxon>
        <taxon>Pseudomonadati</taxon>
        <taxon>Pseudomonadota</taxon>
        <taxon>Betaproteobacteria</taxon>
        <taxon>Rhodocyclales</taxon>
        <taxon>Zoogloeaceae</taxon>
        <taxon>Azoarcus</taxon>
    </lineage>
</organism>
<sequence>MAGHSKWANIQHRKGRQDAKRGKVFTKLIKEVTVAAKMGGGDPNANPRLRLAIDKAKAESMPKDNIENAIKRGTGQLEGVTYEEARYEGYGIAGAAVMVDCLTDNKTRTVADVRHAFSKYGGNMGTDGCVAFQFKHCGQLMFAPGTDEDALMEAALEAGAEDVVANDDGSIEVITGPWEFTTVKETLEKAGFTAEFGEVTMKAQNETELSGDDAARMQKLLDALESLDDVQEVYTSAVLDE</sequence>
<keyword id="KW-0963">Cytoplasm</keyword>
<keyword id="KW-0238">DNA-binding</keyword>
<keyword id="KW-1185">Reference proteome</keyword>
<keyword id="KW-0804">Transcription</keyword>
<keyword id="KW-0805">Transcription regulation</keyword>
<accession>A1K2Y6</accession>
<gene>
    <name type="ordered locus">azo0574</name>
</gene>
<protein>
    <recommendedName>
        <fullName evidence="1">Probable transcriptional regulatory protein azo0574</fullName>
    </recommendedName>
</protein>
<reference key="1">
    <citation type="journal article" date="2006" name="Nat. Biotechnol.">
        <title>Complete genome of the mutualistic, N2-fixing grass endophyte Azoarcus sp. strain BH72.</title>
        <authorList>
            <person name="Krause A."/>
            <person name="Ramakumar A."/>
            <person name="Bartels D."/>
            <person name="Battistoni F."/>
            <person name="Bekel T."/>
            <person name="Boch J."/>
            <person name="Boehm M."/>
            <person name="Friedrich F."/>
            <person name="Hurek T."/>
            <person name="Krause L."/>
            <person name="Linke B."/>
            <person name="McHardy A.C."/>
            <person name="Sarkar A."/>
            <person name="Schneiker S."/>
            <person name="Syed A.A."/>
            <person name="Thauer R."/>
            <person name="Vorhoelter F.-J."/>
            <person name="Weidner S."/>
            <person name="Puehler A."/>
            <person name="Reinhold-Hurek B."/>
            <person name="Kaiser O."/>
            <person name="Goesmann A."/>
        </authorList>
    </citation>
    <scope>NUCLEOTIDE SEQUENCE [LARGE SCALE GENOMIC DNA]</scope>
    <source>
        <strain>BH72</strain>
    </source>
</reference>
<feature type="chain" id="PRO_1000045272" description="Probable transcriptional regulatory protein azo0574">
    <location>
        <begin position="1"/>
        <end position="241"/>
    </location>
</feature>
<feature type="region of interest" description="Disordered" evidence="2">
    <location>
        <begin position="1"/>
        <end position="21"/>
    </location>
</feature>
<name>Y574_AZOSB</name>
<proteinExistence type="inferred from homology"/>
<dbReference type="EMBL" id="AM406670">
    <property type="protein sequence ID" value="CAL93191.1"/>
    <property type="molecule type" value="Genomic_DNA"/>
</dbReference>
<dbReference type="RefSeq" id="WP_011764309.1">
    <property type="nucleotide sequence ID" value="NC_008702.1"/>
</dbReference>
<dbReference type="SMR" id="A1K2Y6"/>
<dbReference type="STRING" id="62928.azo0574"/>
<dbReference type="KEGG" id="aoa:dqs_0644"/>
<dbReference type="KEGG" id="azo:azo0574"/>
<dbReference type="eggNOG" id="COG0217">
    <property type="taxonomic scope" value="Bacteria"/>
</dbReference>
<dbReference type="HOGENOM" id="CLU_062974_2_2_4"/>
<dbReference type="OrthoDB" id="9781053at2"/>
<dbReference type="Proteomes" id="UP000002588">
    <property type="component" value="Chromosome"/>
</dbReference>
<dbReference type="GO" id="GO:0005829">
    <property type="term" value="C:cytosol"/>
    <property type="evidence" value="ECO:0007669"/>
    <property type="project" value="TreeGrafter"/>
</dbReference>
<dbReference type="GO" id="GO:0003677">
    <property type="term" value="F:DNA binding"/>
    <property type="evidence" value="ECO:0007669"/>
    <property type="project" value="UniProtKB-UniRule"/>
</dbReference>
<dbReference type="GO" id="GO:0006355">
    <property type="term" value="P:regulation of DNA-templated transcription"/>
    <property type="evidence" value="ECO:0007669"/>
    <property type="project" value="UniProtKB-UniRule"/>
</dbReference>
<dbReference type="FunFam" id="1.10.10.200:FF:000001">
    <property type="entry name" value="Probable transcriptional regulatory protein YebC"/>
    <property type="match status" value="1"/>
</dbReference>
<dbReference type="FunFam" id="3.30.70.980:FF:000002">
    <property type="entry name" value="Probable transcriptional regulatory protein YebC"/>
    <property type="match status" value="1"/>
</dbReference>
<dbReference type="Gene3D" id="1.10.10.200">
    <property type="match status" value="1"/>
</dbReference>
<dbReference type="Gene3D" id="3.30.70.980">
    <property type="match status" value="2"/>
</dbReference>
<dbReference type="HAMAP" id="MF_00693">
    <property type="entry name" value="Transcrip_reg_TACO1"/>
    <property type="match status" value="1"/>
</dbReference>
<dbReference type="InterPro" id="IPR017856">
    <property type="entry name" value="Integrase-like_N"/>
</dbReference>
<dbReference type="InterPro" id="IPR048300">
    <property type="entry name" value="TACO1_YebC-like_2nd/3rd_dom"/>
</dbReference>
<dbReference type="InterPro" id="IPR049083">
    <property type="entry name" value="TACO1_YebC_N"/>
</dbReference>
<dbReference type="InterPro" id="IPR002876">
    <property type="entry name" value="Transcrip_reg_TACO1-like"/>
</dbReference>
<dbReference type="InterPro" id="IPR026564">
    <property type="entry name" value="Transcrip_reg_TACO1-like_dom3"/>
</dbReference>
<dbReference type="InterPro" id="IPR029072">
    <property type="entry name" value="YebC-like"/>
</dbReference>
<dbReference type="NCBIfam" id="NF001030">
    <property type="entry name" value="PRK00110.1"/>
    <property type="match status" value="1"/>
</dbReference>
<dbReference type="NCBIfam" id="NF009044">
    <property type="entry name" value="PRK12378.1"/>
    <property type="match status" value="1"/>
</dbReference>
<dbReference type="NCBIfam" id="TIGR01033">
    <property type="entry name" value="YebC/PmpR family DNA-binding transcriptional regulator"/>
    <property type="match status" value="1"/>
</dbReference>
<dbReference type="PANTHER" id="PTHR12532:SF6">
    <property type="entry name" value="TRANSCRIPTIONAL REGULATORY PROTEIN YEBC-RELATED"/>
    <property type="match status" value="1"/>
</dbReference>
<dbReference type="PANTHER" id="PTHR12532">
    <property type="entry name" value="TRANSLATIONAL ACTIVATOR OF CYTOCHROME C OXIDASE 1"/>
    <property type="match status" value="1"/>
</dbReference>
<dbReference type="Pfam" id="PF20772">
    <property type="entry name" value="TACO1_YebC_N"/>
    <property type="match status" value="1"/>
</dbReference>
<dbReference type="Pfam" id="PF01709">
    <property type="entry name" value="Transcrip_reg"/>
    <property type="match status" value="1"/>
</dbReference>
<dbReference type="SUPFAM" id="SSF75625">
    <property type="entry name" value="YebC-like"/>
    <property type="match status" value="1"/>
</dbReference>